<evidence type="ECO:0000250" key="1">
    <source>
        <dbReference type="UniProtKB" id="P14611"/>
    </source>
</evidence>
<evidence type="ECO:0000269" key="2">
    <source>
    </source>
</evidence>
<evidence type="ECO:0000303" key="3">
    <source>
    </source>
</evidence>
<evidence type="ECO:0000305" key="4"/>
<evidence type="ECO:0000305" key="5">
    <source>
    </source>
</evidence>
<evidence type="ECO:0000312" key="6">
    <source>
        <dbReference type="PDB" id="6ESQ"/>
    </source>
</evidence>
<evidence type="ECO:0007744" key="7">
    <source>
        <dbReference type="PDB" id="6ESQ"/>
    </source>
</evidence>
<evidence type="ECO:0007744" key="8">
    <source>
        <dbReference type="PDB" id="6ET9"/>
    </source>
</evidence>
<evidence type="ECO:0007829" key="9">
    <source>
        <dbReference type="PDB" id="6ESQ"/>
    </source>
</evidence>
<evidence type="ECO:0007829" key="10">
    <source>
        <dbReference type="PDB" id="6ET9"/>
    </source>
</evidence>
<organism evidence="6">
    <name type="scientific">Methanothermococcus thermolithotrophicus</name>
    <name type="common">Methanococcus thermolithotrophicus</name>
    <dbReference type="NCBI Taxonomy" id="2186"/>
    <lineage>
        <taxon>Archaea</taxon>
        <taxon>Methanobacteriati</taxon>
        <taxon>Methanobacteriota</taxon>
        <taxon>Methanomada group</taxon>
        <taxon>Methanococci</taxon>
        <taxon>Methanococcales</taxon>
        <taxon>Methanococcaceae</taxon>
        <taxon>Methanothermococcus</taxon>
    </lineage>
</organism>
<proteinExistence type="evidence at protein level"/>
<dbReference type="EC" id="2.3.1.9" evidence="2"/>
<dbReference type="RefSeq" id="WP_018154493.1">
    <property type="nucleotide sequence ID" value="NZ_OX296583.1"/>
</dbReference>
<dbReference type="PDB" id="6ESQ">
    <property type="method" value="X-ray"/>
    <property type="resolution" value="2.95 A"/>
    <property type="chains" value="A/B/C/D=1-392"/>
</dbReference>
<dbReference type="PDB" id="6ET9">
    <property type="method" value="X-ray"/>
    <property type="resolution" value="2.75 A"/>
    <property type="chains" value="A/B/C/D=1-392"/>
</dbReference>
<dbReference type="PDBsum" id="6ESQ"/>
<dbReference type="PDBsum" id="6ET9"/>
<dbReference type="SMR" id="A0A384E138"/>
<dbReference type="GeneID" id="75542299"/>
<dbReference type="BioCyc" id="MetaCyc:MONOMER-21122"/>
<dbReference type="BRENDA" id="2.3.1.9">
    <property type="organism ID" value="3266"/>
</dbReference>
<dbReference type="UniPathway" id="UPA00058">
    <property type="reaction ID" value="UER00101"/>
</dbReference>
<dbReference type="GO" id="GO:0003985">
    <property type="term" value="F:acetyl-CoA C-acetyltransferase activity"/>
    <property type="evidence" value="ECO:0007669"/>
    <property type="project" value="UniProtKB-EC"/>
</dbReference>
<dbReference type="GO" id="GO:0008299">
    <property type="term" value="P:isoprenoid biosynthetic process"/>
    <property type="evidence" value="ECO:0007669"/>
    <property type="project" value="UniProtKB-KW"/>
</dbReference>
<dbReference type="CDD" id="cd00829">
    <property type="entry name" value="SCP-x_thiolase"/>
    <property type="match status" value="1"/>
</dbReference>
<dbReference type="Gene3D" id="3.40.47.10">
    <property type="match status" value="1"/>
</dbReference>
<dbReference type="InterPro" id="IPR002155">
    <property type="entry name" value="Thiolase"/>
</dbReference>
<dbReference type="InterPro" id="IPR016039">
    <property type="entry name" value="Thiolase-like"/>
</dbReference>
<dbReference type="InterPro" id="IPR055140">
    <property type="entry name" value="Thiolase_C_2"/>
</dbReference>
<dbReference type="InterPro" id="IPR020616">
    <property type="entry name" value="Thiolase_N"/>
</dbReference>
<dbReference type="NCBIfam" id="NF004720">
    <property type="entry name" value="PRK06064.1"/>
    <property type="match status" value="1"/>
</dbReference>
<dbReference type="PANTHER" id="PTHR42870">
    <property type="entry name" value="ACETYL-COA C-ACETYLTRANSFERASE"/>
    <property type="match status" value="1"/>
</dbReference>
<dbReference type="PANTHER" id="PTHR42870:SF6">
    <property type="entry name" value="ACETYL-COA C-ACYLTRANSFERASE"/>
    <property type="match status" value="1"/>
</dbReference>
<dbReference type="Pfam" id="PF22691">
    <property type="entry name" value="Thiolase_C_1"/>
    <property type="match status" value="1"/>
</dbReference>
<dbReference type="Pfam" id="PF00108">
    <property type="entry name" value="Thiolase_N"/>
    <property type="match status" value="1"/>
</dbReference>
<dbReference type="PIRSF" id="PIRSF000429">
    <property type="entry name" value="Ac-CoA_Ac_transf"/>
    <property type="match status" value="1"/>
</dbReference>
<dbReference type="SUPFAM" id="SSF53901">
    <property type="entry name" value="Thiolase-like"/>
    <property type="match status" value="2"/>
</dbReference>
<sequence length="392" mass="41898">MRDVAIIGYGQTKFGELWEDSFRDLIVEAGVKAIKDANVDGGDIDAMYIGNMSGGLFVGQEHIASLIADHAGLNPVPCTRVEAACASGSLALRSAVLSVASGHHDVVLAGGVEKMTDVEDATAAIASASDQEWEAFFGATFPSLYAMMARRYMYQYGLTIEELSMWSVIAHENATKNKYAQFGFKTTLEQVMNASPVADPLTLMHCSPVSDGASALIVCDADKAEEFAPKDEIIYIKASTQASDTIALHDREDMTTLNAAKVASEKAYKLAKIAPEKIDVAEVHDCFAINGLILVEDLGFCKKGDAGKVIDEGKIRIDYDDFVTVNPSGGLKAAGHALGATGIRQVGELYWQLKQDKECKDRQATIKNGYGIAANVGGTGGTVCVHLLSDKR</sequence>
<reference evidence="7 8" key="1">
    <citation type="journal article" date="2018" name="Proc. Natl. Acad. Sci. U.S.A.">
        <title>Archaeal acetoacetyl-CoA thiolase/HMG-CoA synthase complex channels the intermediate via a fused CoA-binding site.</title>
        <authorList>
            <person name="Vogeli B."/>
            <person name="Engilberge S."/>
            <person name="Girard E."/>
            <person name="Riobe F."/>
            <person name="Maury O."/>
            <person name="Erb T.J."/>
            <person name="Shima S."/>
            <person name="Wagner T."/>
        </authorList>
    </citation>
    <scope>X-RAY CRYSTALLOGRAPHY (2.95 ANGSTROMS) IN COMPLEX WITH COA; HMG-COA SYNTHASE AND A DUF35 PROTEIN</scope>
    <scope>FUNCTION</scope>
    <scope>CATALYTIC ACTIVITY</scope>
    <source>
        <strain>ATCC 35097 / DSM 2095 / JCM 10549 / OCM 138 / SN-1</strain>
    </source>
</reference>
<protein>
    <recommendedName>
        <fullName evidence="5">Acetyl-CoA acetyltransferase</fullName>
        <ecNumber evidence="2">2.3.1.9</ecNumber>
    </recommendedName>
    <alternativeName>
        <fullName evidence="3">Acetoacetyl-CoA thiolase</fullName>
    </alternativeName>
</protein>
<keyword id="KW-0002">3D-structure</keyword>
<keyword id="KW-0012">Acyltransferase</keyword>
<keyword id="KW-0414">Isoprene biosynthesis</keyword>
<keyword id="KW-0808">Transferase</keyword>
<comment type="function">
    <text evidence="2">Catalyzes the condensation of two acetyl-coA molecules into acetoacetyl-CoA. Functions in the mevalonate (MVA) pathway leading to isopentenyl diphosphate (IPP), a key precursor for the biosynthesis of isoprenoid compounds that are building blocks of archaeal membrane lipids.</text>
</comment>
<comment type="catalytic activity">
    <reaction evidence="2">
        <text>2 acetyl-CoA = acetoacetyl-CoA + CoA</text>
        <dbReference type="Rhea" id="RHEA:21036"/>
        <dbReference type="ChEBI" id="CHEBI:57286"/>
        <dbReference type="ChEBI" id="CHEBI:57287"/>
        <dbReference type="ChEBI" id="CHEBI:57288"/>
        <dbReference type="EC" id="2.3.1.9"/>
    </reaction>
    <physiologicalReaction direction="left-to-right" evidence="5">
        <dbReference type="Rhea" id="RHEA:21037"/>
    </physiologicalReaction>
</comment>
<comment type="pathway">
    <text evidence="5">Metabolic intermediate biosynthesis; (R)-mevalonate biosynthesis; (R)-mevalonate from acetyl-CoA: step 1/3.</text>
</comment>
<comment type="subunit">
    <text evidence="2">Interacts with HMG-CoA synthase (HMGCS) that catalyzes the second step in the pathway and with a DUF35 protein. The acetoacetyl-CoA thiolase/HMG-CoA synthase complex channels the intermediate via a fused CoA-binding site, which allows for efficient coupling of the endergonic thiolase reaction with the exergonic HMGCS reaction.</text>
</comment>
<comment type="similarity">
    <text evidence="4">Belongs to the thiolase-like superfamily. Thiolase family.</text>
</comment>
<feature type="chain" id="PRO_0000461305" description="Acetyl-CoA acetyltransferase">
    <location>
        <begin position="1"/>
        <end position="392"/>
    </location>
</feature>
<feature type="active site" description="Acyl-thioester intermediate" evidence="1">
    <location>
        <position position="85"/>
    </location>
</feature>
<feature type="active site" description="Proton acceptor" evidence="1">
    <location>
        <position position="336"/>
    </location>
</feature>
<feature type="binding site" evidence="2 7">
    <location>
        <position position="206"/>
    </location>
    <ligand>
        <name>CoA</name>
        <dbReference type="ChEBI" id="CHEBI:57287"/>
        <note>ligand shared with HMG-CoA synthase</note>
    </ligand>
</feature>
<feature type="binding site" evidence="2 7">
    <location>
        <position position="207"/>
    </location>
    <ligand>
        <name>CoA</name>
        <dbReference type="ChEBI" id="CHEBI:57287"/>
        <note>ligand shared with HMG-CoA synthase</note>
    </ligand>
</feature>
<feature type="binding site" evidence="2 7">
    <location>
        <position position="209"/>
    </location>
    <ligand>
        <name>CoA</name>
        <dbReference type="ChEBI" id="CHEBI:57287"/>
        <note>ligand shared with HMG-CoA synthase</note>
    </ligand>
</feature>
<feature type="binding site" evidence="2 7">
    <location>
        <position position="332"/>
    </location>
    <ligand>
        <name>CoA</name>
        <dbReference type="ChEBI" id="CHEBI:57287"/>
        <note>ligand shared with HMG-CoA synthase</note>
    </ligand>
</feature>
<feature type="strand" evidence="10">
    <location>
        <begin position="4"/>
        <end position="11"/>
    </location>
</feature>
<feature type="strand" evidence="10">
    <location>
        <begin position="18"/>
        <end position="20"/>
    </location>
</feature>
<feature type="helix" evidence="10">
    <location>
        <begin position="22"/>
        <end position="37"/>
    </location>
</feature>
<feature type="helix" evidence="10">
    <location>
        <begin position="41"/>
        <end position="43"/>
    </location>
</feature>
<feature type="strand" evidence="10">
    <location>
        <begin position="46"/>
        <end position="50"/>
    </location>
</feature>
<feature type="turn" evidence="10">
    <location>
        <begin position="54"/>
        <end position="57"/>
    </location>
</feature>
<feature type="helix" evidence="10">
    <location>
        <begin position="63"/>
        <end position="71"/>
    </location>
</feature>
<feature type="strand" evidence="10">
    <location>
        <begin position="78"/>
        <end position="82"/>
    </location>
</feature>
<feature type="helix" evidence="10">
    <location>
        <begin position="84"/>
        <end position="86"/>
    </location>
</feature>
<feature type="helix" evidence="10">
    <location>
        <begin position="87"/>
        <end position="100"/>
    </location>
</feature>
<feature type="strand" evidence="10">
    <location>
        <begin position="105"/>
        <end position="114"/>
    </location>
</feature>
<feature type="helix" evidence="10">
    <location>
        <begin position="115"/>
        <end position="117"/>
    </location>
</feature>
<feature type="helix" evidence="10">
    <location>
        <begin position="122"/>
        <end position="125"/>
    </location>
</feature>
<feature type="helix" evidence="10">
    <location>
        <begin position="126"/>
        <end position="128"/>
    </location>
</feature>
<feature type="helix" evidence="10">
    <location>
        <begin position="131"/>
        <end position="135"/>
    </location>
</feature>
<feature type="turn" evidence="10">
    <location>
        <begin position="136"/>
        <end position="138"/>
    </location>
</feature>
<feature type="helix" evidence="10">
    <location>
        <begin position="141"/>
        <end position="156"/>
    </location>
</feature>
<feature type="helix" evidence="10">
    <location>
        <begin position="160"/>
        <end position="174"/>
    </location>
</feature>
<feature type="helix" evidence="10">
    <location>
        <begin position="188"/>
        <end position="193"/>
    </location>
</feature>
<feature type="strand" evidence="10">
    <location>
        <begin position="196"/>
        <end position="198"/>
    </location>
</feature>
<feature type="turn" evidence="10">
    <location>
        <begin position="203"/>
        <end position="205"/>
    </location>
</feature>
<feature type="strand" evidence="10">
    <location>
        <begin position="211"/>
        <end position="220"/>
    </location>
</feature>
<feature type="turn" evidence="10">
    <location>
        <begin position="221"/>
        <end position="223"/>
    </location>
</feature>
<feature type="helix" evidence="10">
    <location>
        <begin position="224"/>
        <end position="227"/>
    </location>
</feature>
<feature type="helix" evidence="9">
    <location>
        <begin position="230"/>
        <end position="232"/>
    </location>
</feature>
<feature type="strand" evidence="10">
    <location>
        <begin position="234"/>
        <end position="243"/>
    </location>
</feature>
<feature type="helix" evidence="10">
    <location>
        <begin position="248"/>
        <end position="250"/>
    </location>
</feature>
<feature type="strand" evidence="9">
    <location>
        <begin position="254"/>
        <end position="256"/>
    </location>
</feature>
<feature type="helix" evidence="10">
    <location>
        <begin position="258"/>
        <end position="271"/>
    </location>
</feature>
<feature type="helix" evidence="10">
    <location>
        <begin position="275"/>
        <end position="277"/>
    </location>
</feature>
<feature type="strand" evidence="10">
    <location>
        <begin position="279"/>
        <end position="283"/>
    </location>
</feature>
<feature type="strand" evidence="9">
    <location>
        <begin position="286"/>
        <end position="288"/>
    </location>
</feature>
<feature type="helix" evidence="10">
    <location>
        <begin position="289"/>
        <end position="297"/>
    </location>
</feature>
<feature type="turn" evidence="9">
    <location>
        <begin position="303"/>
        <end position="305"/>
    </location>
</feature>
<feature type="helix" evidence="10">
    <location>
        <begin position="306"/>
        <end position="312"/>
    </location>
</feature>
<feature type="turn" evidence="10">
    <location>
        <begin position="313"/>
        <end position="315"/>
    </location>
</feature>
<feature type="strand" evidence="10">
    <location>
        <begin position="316"/>
        <end position="318"/>
    </location>
</feature>
<feature type="helix" evidence="10">
    <location>
        <begin position="330"/>
        <end position="334"/>
    </location>
</feature>
<feature type="helix" evidence="10">
    <location>
        <begin position="338"/>
        <end position="354"/>
    </location>
</feature>
<feature type="helix" evidence="10">
    <location>
        <begin position="357"/>
        <end position="362"/>
    </location>
</feature>
<feature type="strand" evidence="10">
    <location>
        <begin position="370"/>
        <end position="377"/>
    </location>
</feature>
<feature type="turn" evidence="10">
    <location>
        <begin position="378"/>
        <end position="381"/>
    </location>
</feature>
<feature type="strand" evidence="10">
    <location>
        <begin position="382"/>
        <end position="390"/>
    </location>
</feature>
<accession>A0A384E138</accession>
<name>THIOL_METTL</name>